<organism>
    <name type="scientific">Helicobacter pylori (strain J99 / ATCC 700824)</name>
    <name type="common">Campylobacter pylori J99</name>
    <dbReference type="NCBI Taxonomy" id="85963"/>
    <lineage>
        <taxon>Bacteria</taxon>
        <taxon>Pseudomonadati</taxon>
        <taxon>Campylobacterota</taxon>
        <taxon>Epsilonproteobacteria</taxon>
        <taxon>Campylobacterales</taxon>
        <taxon>Helicobacteraceae</taxon>
        <taxon>Helicobacter</taxon>
    </lineage>
</organism>
<reference key="1">
    <citation type="journal article" date="1999" name="Nature">
        <title>Genomic sequence comparison of two unrelated isolates of the human gastric pathogen Helicobacter pylori.</title>
        <authorList>
            <person name="Alm R.A."/>
            <person name="Ling L.-S.L."/>
            <person name="Moir D.T."/>
            <person name="King B.L."/>
            <person name="Brown E.D."/>
            <person name="Doig P.C."/>
            <person name="Smith D.R."/>
            <person name="Noonan B."/>
            <person name="Guild B.C."/>
            <person name="deJonge B.L."/>
            <person name="Carmel G."/>
            <person name="Tummino P.J."/>
            <person name="Caruso A."/>
            <person name="Uria-Nickelsen M."/>
            <person name="Mills D.M."/>
            <person name="Ives C."/>
            <person name="Gibson R."/>
            <person name="Merberg D."/>
            <person name="Mills S.D."/>
            <person name="Jiang Q."/>
            <person name="Taylor D.E."/>
            <person name="Vovis G.F."/>
            <person name="Trust T.J."/>
        </authorList>
    </citation>
    <scope>NUCLEOTIDE SEQUENCE [LARGE SCALE GENOMIC DNA]</scope>
    <source>
        <strain>J99 / ATCC 700824</strain>
    </source>
</reference>
<proteinExistence type="inferred from homology"/>
<keyword id="KW-0030">Aminoacyl-tRNA synthetase</keyword>
<keyword id="KW-0067">ATP-binding</keyword>
<keyword id="KW-0963">Cytoplasm</keyword>
<keyword id="KW-0436">Ligase</keyword>
<keyword id="KW-0460">Magnesium</keyword>
<keyword id="KW-0479">Metal-binding</keyword>
<keyword id="KW-0547">Nucleotide-binding</keyword>
<keyword id="KW-0648">Protein biosynthesis</keyword>
<sequence length="501" mass="57667">MFSNQYIQQRIHKANSLREEGKNPYKNGLKRSLTNAAFLEKYAYVKGLEEPKDKEKCESVVGRVKLLRLMGKACFIKIEDESAILQAYVSQNELNDEFKSLKKHLEVGDIVLVKGFPFATKTGELSIHALEFHILSKTIVPLPEKFHGLSDIELRYRQRYLDLIVNPGVKDVFKKRSLIVSSVRKFFEMEGFLEVETPMMHPIPGGANARPFITYHNALEIERYLRIAPELYLKRLIVGGFEAVFEINRNFRNEGMDHSHNPEFTMIEFYWAYHTYEDLIELSKRLFDYLLKTLNLDSKIIYNDMEVDFNQTSVISYLDALETIGGISKGILEKEDRLLAYLLEQGIKVEPNLTHGKLLAEAFDHFVEHKLINPTFVTEYPIEISPLARRNDSNPNIADRFELFIAGKEIANGFSELNDPLDQLERFKNQVAEKEKGDEEAQYMDEDYVWALAHEMPPTAGQGIGIDRLVMLLTGAKSIKDVILFPAMRPVKNDFNVEGEE</sequence>
<evidence type="ECO:0000250" key="1"/>
<evidence type="ECO:0000305" key="2"/>
<gene>
    <name type="primary">lysS</name>
    <name type="ordered locus">jhp_0170</name>
</gene>
<name>SYK_HELPJ</name>
<protein>
    <recommendedName>
        <fullName>Lysine--tRNA ligase</fullName>
        <ecNumber>6.1.1.6</ecNumber>
    </recommendedName>
    <alternativeName>
        <fullName>Lysyl-tRNA synthetase</fullName>
        <shortName>LysRS</shortName>
    </alternativeName>
</protein>
<comment type="catalytic activity">
    <reaction>
        <text>tRNA(Lys) + L-lysine + ATP = L-lysyl-tRNA(Lys) + AMP + diphosphate</text>
        <dbReference type="Rhea" id="RHEA:20792"/>
        <dbReference type="Rhea" id="RHEA-COMP:9696"/>
        <dbReference type="Rhea" id="RHEA-COMP:9697"/>
        <dbReference type="ChEBI" id="CHEBI:30616"/>
        <dbReference type="ChEBI" id="CHEBI:32551"/>
        <dbReference type="ChEBI" id="CHEBI:33019"/>
        <dbReference type="ChEBI" id="CHEBI:78442"/>
        <dbReference type="ChEBI" id="CHEBI:78529"/>
        <dbReference type="ChEBI" id="CHEBI:456215"/>
        <dbReference type="EC" id="6.1.1.6"/>
    </reaction>
</comment>
<comment type="cofactor">
    <cofactor evidence="1">
        <name>Mg(2+)</name>
        <dbReference type="ChEBI" id="CHEBI:18420"/>
    </cofactor>
    <text evidence="1">Binds 3 Mg(2+) ions per subunit.</text>
</comment>
<comment type="subunit">
    <text evidence="1">Homodimer.</text>
</comment>
<comment type="subcellular location">
    <subcellularLocation>
        <location evidence="1">Cytoplasm</location>
    </subcellularLocation>
</comment>
<comment type="similarity">
    <text evidence="2">Belongs to the class-II aminoacyl-tRNA synthetase family.</text>
</comment>
<accession>Q9ZMP8</accession>
<dbReference type="EC" id="6.1.1.6"/>
<dbReference type="EMBL" id="AE001439">
    <property type="protein sequence ID" value="AAD05751.1"/>
    <property type="molecule type" value="Genomic_DNA"/>
</dbReference>
<dbReference type="PIR" id="F71965">
    <property type="entry name" value="F71965"/>
</dbReference>
<dbReference type="RefSeq" id="WP_000492538.1">
    <property type="nucleotide sequence ID" value="NC_000921.1"/>
</dbReference>
<dbReference type="SMR" id="Q9ZMP8"/>
<dbReference type="KEGG" id="hpj:jhp_0170"/>
<dbReference type="eggNOG" id="COG1190">
    <property type="taxonomic scope" value="Bacteria"/>
</dbReference>
<dbReference type="Proteomes" id="UP000000804">
    <property type="component" value="Chromosome"/>
</dbReference>
<dbReference type="GO" id="GO:0005829">
    <property type="term" value="C:cytosol"/>
    <property type="evidence" value="ECO:0007669"/>
    <property type="project" value="TreeGrafter"/>
</dbReference>
<dbReference type="GO" id="GO:0005524">
    <property type="term" value="F:ATP binding"/>
    <property type="evidence" value="ECO:0007669"/>
    <property type="project" value="UniProtKB-UniRule"/>
</dbReference>
<dbReference type="GO" id="GO:0004824">
    <property type="term" value="F:lysine-tRNA ligase activity"/>
    <property type="evidence" value="ECO:0007669"/>
    <property type="project" value="UniProtKB-UniRule"/>
</dbReference>
<dbReference type="GO" id="GO:0000287">
    <property type="term" value="F:magnesium ion binding"/>
    <property type="evidence" value="ECO:0007669"/>
    <property type="project" value="UniProtKB-UniRule"/>
</dbReference>
<dbReference type="GO" id="GO:0000049">
    <property type="term" value="F:tRNA binding"/>
    <property type="evidence" value="ECO:0007669"/>
    <property type="project" value="TreeGrafter"/>
</dbReference>
<dbReference type="GO" id="GO:0006430">
    <property type="term" value="P:lysyl-tRNA aminoacylation"/>
    <property type="evidence" value="ECO:0007669"/>
    <property type="project" value="UniProtKB-UniRule"/>
</dbReference>
<dbReference type="CDD" id="cd00775">
    <property type="entry name" value="LysRS_core"/>
    <property type="match status" value="1"/>
</dbReference>
<dbReference type="CDD" id="cd04322">
    <property type="entry name" value="LysRS_N"/>
    <property type="match status" value="1"/>
</dbReference>
<dbReference type="Gene3D" id="3.30.930.10">
    <property type="entry name" value="Bira Bifunctional Protein, Domain 2"/>
    <property type="match status" value="1"/>
</dbReference>
<dbReference type="Gene3D" id="2.40.50.140">
    <property type="entry name" value="Nucleic acid-binding proteins"/>
    <property type="match status" value="1"/>
</dbReference>
<dbReference type="HAMAP" id="MF_00252">
    <property type="entry name" value="Lys_tRNA_synth_class2"/>
    <property type="match status" value="1"/>
</dbReference>
<dbReference type="InterPro" id="IPR004364">
    <property type="entry name" value="Aa-tRNA-synt_II"/>
</dbReference>
<dbReference type="InterPro" id="IPR006195">
    <property type="entry name" value="aa-tRNA-synth_II"/>
</dbReference>
<dbReference type="InterPro" id="IPR045864">
    <property type="entry name" value="aa-tRNA-synth_II/BPL/LPL"/>
</dbReference>
<dbReference type="InterPro" id="IPR002313">
    <property type="entry name" value="Lys-tRNA-ligase_II"/>
</dbReference>
<dbReference type="InterPro" id="IPR044136">
    <property type="entry name" value="Lys-tRNA-ligase_II_N"/>
</dbReference>
<dbReference type="InterPro" id="IPR018149">
    <property type="entry name" value="Lys-tRNA-synth_II_C"/>
</dbReference>
<dbReference type="InterPro" id="IPR012340">
    <property type="entry name" value="NA-bd_OB-fold"/>
</dbReference>
<dbReference type="InterPro" id="IPR004365">
    <property type="entry name" value="NA-bd_OB_tRNA"/>
</dbReference>
<dbReference type="NCBIfam" id="TIGR00499">
    <property type="entry name" value="lysS_bact"/>
    <property type="match status" value="1"/>
</dbReference>
<dbReference type="NCBIfam" id="NF001756">
    <property type="entry name" value="PRK00484.1"/>
    <property type="match status" value="1"/>
</dbReference>
<dbReference type="PANTHER" id="PTHR42918:SF15">
    <property type="entry name" value="LYSINE--TRNA LIGASE, CHLOROPLASTIC_MITOCHONDRIAL"/>
    <property type="match status" value="1"/>
</dbReference>
<dbReference type="PANTHER" id="PTHR42918">
    <property type="entry name" value="LYSYL-TRNA SYNTHETASE"/>
    <property type="match status" value="1"/>
</dbReference>
<dbReference type="Pfam" id="PF00152">
    <property type="entry name" value="tRNA-synt_2"/>
    <property type="match status" value="1"/>
</dbReference>
<dbReference type="Pfam" id="PF01336">
    <property type="entry name" value="tRNA_anti-codon"/>
    <property type="match status" value="1"/>
</dbReference>
<dbReference type="PRINTS" id="PR00982">
    <property type="entry name" value="TRNASYNTHLYS"/>
</dbReference>
<dbReference type="SUPFAM" id="SSF55681">
    <property type="entry name" value="Class II aaRS and biotin synthetases"/>
    <property type="match status" value="1"/>
</dbReference>
<dbReference type="SUPFAM" id="SSF50249">
    <property type="entry name" value="Nucleic acid-binding proteins"/>
    <property type="match status" value="1"/>
</dbReference>
<dbReference type="PROSITE" id="PS50862">
    <property type="entry name" value="AA_TRNA_LIGASE_II"/>
    <property type="match status" value="1"/>
</dbReference>
<feature type="chain" id="PRO_0000152637" description="Lysine--tRNA ligase">
    <location>
        <begin position="1"/>
        <end position="501"/>
    </location>
</feature>
<feature type="binding site" evidence="1">
    <location>
        <position position="402"/>
    </location>
    <ligand>
        <name>Mg(2+)</name>
        <dbReference type="ChEBI" id="CHEBI:18420"/>
        <label>1</label>
    </ligand>
</feature>
<feature type="binding site" evidence="1">
    <location>
        <position position="409"/>
    </location>
    <ligand>
        <name>Mg(2+)</name>
        <dbReference type="ChEBI" id="CHEBI:18420"/>
        <label>1</label>
    </ligand>
</feature>
<feature type="binding site" evidence="1">
    <location>
        <position position="409"/>
    </location>
    <ligand>
        <name>Mg(2+)</name>
        <dbReference type="ChEBI" id="CHEBI:18420"/>
        <label>2</label>
    </ligand>
</feature>